<name>S1PR1_MOUSE</name>
<keyword id="KW-0007">Acetylation</keyword>
<keyword id="KW-0037">Angiogenesis</keyword>
<keyword id="KW-1003">Cell membrane</keyword>
<keyword id="KW-0145">Chemotaxis</keyword>
<keyword id="KW-1015">Disulfide bond</keyword>
<keyword id="KW-0967">Endosome</keyword>
<keyword id="KW-0297">G-protein coupled receptor</keyword>
<keyword id="KW-0325">Glycoprotein</keyword>
<keyword id="KW-0449">Lipoprotein</keyword>
<keyword id="KW-0472">Membrane</keyword>
<keyword id="KW-0564">Palmitate</keyword>
<keyword id="KW-0597">Phosphoprotein</keyword>
<keyword id="KW-0675">Receptor</keyword>
<keyword id="KW-1185">Reference proteome</keyword>
<keyword id="KW-0807">Transducer</keyword>
<keyword id="KW-0812">Transmembrane</keyword>
<keyword id="KW-1133">Transmembrane helix</keyword>
<evidence type="ECO:0000250" key="1"/>
<evidence type="ECO:0000250" key="2">
    <source>
        <dbReference type="UniProtKB" id="P21453"/>
    </source>
</evidence>
<evidence type="ECO:0000255" key="3"/>
<evidence type="ECO:0000255" key="4">
    <source>
        <dbReference type="PROSITE-ProRule" id="PRU00521"/>
    </source>
</evidence>
<evidence type="ECO:0000256" key="5">
    <source>
        <dbReference type="SAM" id="MobiDB-lite"/>
    </source>
</evidence>
<evidence type="ECO:0000269" key="6">
    <source>
    </source>
</evidence>
<evidence type="ECO:0000269" key="7">
    <source>
    </source>
</evidence>
<evidence type="ECO:0000269" key="8">
    <source>
    </source>
</evidence>
<evidence type="ECO:0000269" key="9">
    <source>
    </source>
</evidence>
<evidence type="ECO:0000269" key="10">
    <source>
    </source>
</evidence>
<evidence type="ECO:0000269" key="11">
    <source>
    </source>
</evidence>
<evidence type="ECO:0000269" key="12">
    <source>
    </source>
</evidence>
<evidence type="ECO:0000269" key="13">
    <source>
    </source>
</evidence>
<evidence type="ECO:0000269" key="14">
    <source>
    </source>
</evidence>
<evidence type="ECO:0000269" key="15">
    <source>
    </source>
</evidence>
<evidence type="ECO:0000269" key="16">
    <source>
    </source>
</evidence>
<evidence type="ECO:0000269" key="17">
    <source>
    </source>
</evidence>
<evidence type="ECO:0000303" key="18">
    <source>
    </source>
</evidence>
<evidence type="ECO:0000305" key="19"/>
<evidence type="ECO:0000312" key="20">
    <source>
        <dbReference type="MGI" id="MGI:1096355"/>
    </source>
</evidence>
<evidence type="ECO:0007744" key="21">
    <source>
    </source>
</evidence>
<evidence type="ECO:0007744" key="22">
    <source>
    </source>
</evidence>
<organism>
    <name type="scientific">Mus musculus</name>
    <name type="common">Mouse</name>
    <dbReference type="NCBI Taxonomy" id="10090"/>
    <lineage>
        <taxon>Eukaryota</taxon>
        <taxon>Metazoa</taxon>
        <taxon>Chordata</taxon>
        <taxon>Craniata</taxon>
        <taxon>Vertebrata</taxon>
        <taxon>Euteleostomi</taxon>
        <taxon>Mammalia</taxon>
        <taxon>Eutheria</taxon>
        <taxon>Euarchontoglires</taxon>
        <taxon>Glires</taxon>
        <taxon>Rodentia</taxon>
        <taxon>Myomorpha</taxon>
        <taxon>Muroidea</taxon>
        <taxon>Muridae</taxon>
        <taxon>Murinae</taxon>
        <taxon>Mus</taxon>
        <taxon>Mus</taxon>
    </lineage>
</organism>
<accession>O08530</accession>
<accession>Q9DC35</accession>
<accession>Q9R235</accession>
<gene>
    <name evidence="20" type="primary">S1pr1</name>
    <name type="synonym">Edg1</name>
    <name type="synonym">Lpb1</name>
</gene>
<feature type="initiator methionine" description="Removed" evidence="22">
    <location>
        <position position="1"/>
    </location>
</feature>
<feature type="chain" id="PRO_0000069413" description="Sphingosine 1-phosphate receptor 1">
    <location>
        <begin position="2"/>
        <end position="382"/>
    </location>
</feature>
<feature type="topological domain" description="Extracellular" evidence="1">
    <location>
        <begin position="2"/>
        <end position="46"/>
    </location>
</feature>
<feature type="transmembrane region" description="Helical; Name=1" evidence="1">
    <location>
        <begin position="47"/>
        <end position="68"/>
    </location>
</feature>
<feature type="topological domain" description="Cytoplasmic" evidence="1">
    <location>
        <begin position="69"/>
        <end position="82"/>
    </location>
</feature>
<feature type="transmembrane region" description="Helical; Name=2" evidence="1">
    <location>
        <begin position="83"/>
        <end position="104"/>
    </location>
</feature>
<feature type="topological domain" description="Extracellular" evidence="1">
    <location>
        <begin position="105"/>
        <end position="116"/>
    </location>
</feature>
<feature type="transmembrane region" description="Helical; Name=3" evidence="1">
    <location>
        <begin position="117"/>
        <end position="138"/>
    </location>
</feature>
<feature type="topological domain" description="Cytoplasmic" evidence="1">
    <location>
        <begin position="139"/>
        <end position="160"/>
    </location>
</feature>
<feature type="transmembrane region" description="Helical; Name=4" evidence="1">
    <location>
        <begin position="161"/>
        <end position="182"/>
    </location>
</feature>
<feature type="topological domain" description="Extracellular" evidence="1">
    <location>
        <begin position="183"/>
        <end position="196"/>
    </location>
</feature>
<feature type="transmembrane region" description="Helical; Name=5" evidence="1">
    <location>
        <begin position="197"/>
        <end position="224"/>
    </location>
</feature>
<feature type="topological domain" description="Cytoplasmic" evidence="1">
    <location>
        <begin position="225"/>
        <end position="257"/>
    </location>
</feature>
<feature type="transmembrane region" description="Helical; Name=6" evidence="1">
    <location>
        <begin position="258"/>
        <end position="278"/>
    </location>
</feature>
<feature type="topological domain" description="Extracellular" evidence="1">
    <location>
        <begin position="279"/>
        <end position="289"/>
    </location>
</feature>
<feature type="transmembrane region" description="Helical; Name=7" evidence="1">
    <location>
        <begin position="290"/>
        <end position="310"/>
    </location>
</feature>
<feature type="topological domain" description="Cytoplasmic" evidence="1">
    <location>
        <begin position="311"/>
        <end position="382"/>
    </location>
</feature>
<feature type="region of interest" description="Disordered" evidence="5">
    <location>
        <begin position="348"/>
        <end position="382"/>
    </location>
</feature>
<feature type="compositionally biased region" description="Basic and acidic residues" evidence="5">
    <location>
        <begin position="351"/>
        <end position="366"/>
    </location>
</feature>
<feature type="compositionally biased region" description="Polar residues" evidence="5">
    <location>
        <begin position="371"/>
        <end position="382"/>
    </location>
</feature>
<feature type="binding site" evidence="1">
    <location>
        <begin position="120"/>
        <end position="121"/>
    </location>
    <ligand>
        <name>sphing-4-enine 1-phosphate</name>
        <dbReference type="ChEBI" id="CHEBI:60119"/>
    </ligand>
</feature>
<feature type="binding site" evidence="1">
    <location>
        <begin position="265"/>
        <end position="269"/>
    </location>
    <ligand>
        <name>sphing-4-enine 1-phosphate</name>
        <dbReference type="ChEBI" id="CHEBI:60119"/>
    </ligand>
</feature>
<feature type="modified residue" description="N-acetylvaline" evidence="22">
    <location>
        <position position="2"/>
    </location>
</feature>
<feature type="modified residue" description="N6-acetyllysine" evidence="22">
    <location>
        <position position="10"/>
    </location>
</feature>
<feature type="modified residue" description="Phosphothreonine" evidence="2">
    <location>
        <position position="236"/>
    </location>
</feature>
<feature type="modified residue" description="Phosphoserine" evidence="21">
    <location>
        <position position="351"/>
    </location>
</feature>
<feature type="modified residue" description="Phosphoserine" evidence="3">
    <location>
        <position position="353"/>
    </location>
</feature>
<feature type="lipid moiety-binding region" description="S-palmitoyl cysteine" evidence="1">
    <location>
        <position position="328"/>
    </location>
</feature>
<feature type="glycosylation site" description="N-linked (GlcNAc...) asparagine" evidence="3">
    <location>
        <position position="30"/>
    </location>
</feature>
<feature type="disulfide bond" evidence="4">
    <location>
        <begin position="184"/>
        <end position="191"/>
    </location>
</feature>
<feature type="disulfide bond" evidence="4">
    <location>
        <begin position="282"/>
        <end position="287"/>
    </location>
</feature>
<feature type="sequence conflict" description="In Ref. 1; AAC53294 and 2; AAD16975." evidence="19" ref="1 2">
    <original>I</original>
    <variation>S</variation>
    <location>
        <position position="179"/>
    </location>
</feature>
<feature type="sequence conflict" description="In Ref. 1; AAC53294." evidence="19" ref="1">
    <original>V</original>
    <variation>A</variation>
    <location>
        <position position="218"/>
    </location>
</feature>
<feature type="sequence conflict" description="In Ref. 1; AAC53294." evidence="19" ref="1">
    <original>A</original>
    <variation>G</variation>
    <location>
        <position position="244"/>
    </location>
</feature>
<sequence length="382" mass="42639">MVSTSIPEVKALRSSVSDYGNYDIIVRHYNYTGKLNIGAEKDHGIKLTSVVFILICCFIILENIFVLLTIWKTKKFHRPMYYFIGNLALSDLLAGVAYTANLLLSGATTYKLTPAQWFLREGSMFVALSASVFSLLAIAIERYITMLKMKLHNGSNSSRSFLLISACWVISLILGGLPIMGWNCISSLSSCSTVLPLYHKHYILFCTTVFTLLLLSIVILYCRIYSLVRTRSRRLTFRKNISKASRSSEKSLALLKTVIIVLSVFIACWAPLFILLLLDVGCKAKTCDILYKAEYFLVLAVLNSGTNPIIYTLTNKEMRRAFIRIVSCCKCPNGDSAGKFKRPIIPGMEFSRSKSDNSSHPQKDDGDNPETIMSSGNVNSSS</sequence>
<dbReference type="EMBL" id="U40811">
    <property type="protein sequence ID" value="AAC53294.1"/>
    <property type="molecule type" value="Genomic_DNA"/>
</dbReference>
<dbReference type="EMBL" id="AF108019">
    <property type="protein sequence ID" value="AAD16975.1"/>
    <property type="molecule type" value="Genomic_DNA"/>
</dbReference>
<dbReference type="EMBL" id="AK004591">
    <property type="protein sequence ID" value="BAB23393.1"/>
    <property type="molecule type" value="mRNA"/>
</dbReference>
<dbReference type="EMBL" id="AK146501">
    <property type="protein sequence ID" value="BAE27216.1"/>
    <property type="molecule type" value="mRNA"/>
</dbReference>
<dbReference type="EMBL" id="CH466532">
    <property type="protein sequence ID" value="EDL12402.1"/>
    <property type="molecule type" value="Genomic_DNA"/>
</dbReference>
<dbReference type="EMBL" id="BC049094">
    <property type="protein sequence ID" value="AAH49094.1"/>
    <property type="molecule type" value="mRNA"/>
</dbReference>
<dbReference type="EMBL" id="BC051023">
    <property type="protein sequence ID" value="AAH51023.1"/>
    <property type="molecule type" value="mRNA"/>
</dbReference>
<dbReference type="CCDS" id="CCDS17781.1"/>
<dbReference type="RefSeq" id="NP_031927.2">
    <property type="nucleotide sequence ID" value="NM_007901.5"/>
</dbReference>
<dbReference type="SMR" id="O08530"/>
<dbReference type="BioGRID" id="199373">
    <property type="interactions" value="3"/>
</dbReference>
<dbReference type="DIP" id="DIP-32248N"/>
<dbReference type="FunCoup" id="O08530">
    <property type="interactions" value="2015"/>
</dbReference>
<dbReference type="IntAct" id="O08530">
    <property type="interactions" value="1"/>
</dbReference>
<dbReference type="STRING" id="10090.ENSMUSP00000050897"/>
<dbReference type="BindingDB" id="O08530"/>
<dbReference type="ChEMBL" id="CHEMBL1914262"/>
<dbReference type="GuidetoPHARMACOLOGY" id="275"/>
<dbReference type="GlyCosmos" id="O08530">
    <property type="glycosylation" value="1 site, No reported glycans"/>
</dbReference>
<dbReference type="GlyGen" id="O08530">
    <property type="glycosylation" value="3 sites, 3 N-linked glycans (3 sites)"/>
</dbReference>
<dbReference type="iPTMnet" id="O08530"/>
<dbReference type="PhosphoSitePlus" id="O08530"/>
<dbReference type="SwissPalm" id="O08530"/>
<dbReference type="PaxDb" id="10090-ENSMUSP00000050897"/>
<dbReference type="ProteomicsDB" id="256817"/>
<dbReference type="Pumba" id="O08530"/>
<dbReference type="Antibodypedia" id="4111">
    <property type="antibodies" value="751 antibodies from 45 providers"/>
</dbReference>
<dbReference type="DNASU" id="13609"/>
<dbReference type="Ensembl" id="ENSMUST00000055676.4">
    <property type="protein sequence ID" value="ENSMUSP00000050897.3"/>
    <property type="gene ID" value="ENSMUSG00000045092.9"/>
</dbReference>
<dbReference type="GeneID" id="13609"/>
<dbReference type="KEGG" id="mmu:13609"/>
<dbReference type="UCSC" id="uc008rbo.2">
    <property type="organism name" value="mouse"/>
</dbReference>
<dbReference type="AGR" id="MGI:1096355"/>
<dbReference type="CTD" id="1901"/>
<dbReference type="MGI" id="MGI:1096355">
    <property type="gene designation" value="S1pr1"/>
</dbReference>
<dbReference type="VEuPathDB" id="HostDB:ENSMUSG00000045092"/>
<dbReference type="eggNOG" id="ENOG502QSFG">
    <property type="taxonomic scope" value="Eukaryota"/>
</dbReference>
<dbReference type="GeneTree" id="ENSGT01050000244887"/>
<dbReference type="HOGENOM" id="CLU_047979_1_0_1"/>
<dbReference type="InParanoid" id="O08530"/>
<dbReference type="OMA" id="LSCCKCP"/>
<dbReference type="OrthoDB" id="9945063at2759"/>
<dbReference type="PhylomeDB" id="O08530"/>
<dbReference type="TreeFam" id="TF330052"/>
<dbReference type="Reactome" id="R-MMU-419408">
    <property type="pathway name" value="Lysosphingolipid and LPA receptors"/>
</dbReference>
<dbReference type="BioGRID-ORCS" id="13609">
    <property type="hits" value="1 hit in 79 CRISPR screens"/>
</dbReference>
<dbReference type="CD-CODE" id="CE726F99">
    <property type="entry name" value="Postsynaptic density"/>
</dbReference>
<dbReference type="ChiTaRS" id="S1pr1">
    <property type="organism name" value="mouse"/>
</dbReference>
<dbReference type="PRO" id="PR:O08530"/>
<dbReference type="Proteomes" id="UP000000589">
    <property type="component" value="Chromosome 3"/>
</dbReference>
<dbReference type="RNAct" id="O08530">
    <property type="molecule type" value="protein"/>
</dbReference>
<dbReference type="Bgee" id="ENSMUSG00000045092">
    <property type="expression patterns" value="Expressed in right lung lobe and 209 other cell types or tissues"/>
</dbReference>
<dbReference type="GO" id="GO:0005768">
    <property type="term" value="C:endosome"/>
    <property type="evidence" value="ECO:0007669"/>
    <property type="project" value="UniProtKB-SubCell"/>
</dbReference>
<dbReference type="GO" id="GO:0009897">
    <property type="term" value="C:external side of plasma membrane"/>
    <property type="evidence" value="ECO:0000315"/>
    <property type="project" value="MGI"/>
</dbReference>
<dbReference type="GO" id="GO:0045121">
    <property type="term" value="C:membrane raft"/>
    <property type="evidence" value="ECO:0007669"/>
    <property type="project" value="UniProtKB-SubCell"/>
</dbReference>
<dbReference type="GO" id="GO:0005654">
    <property type="term" value="C:nucleoplasm"/>
    <property type="evidence" value="ECO:0007669"/>
    <property type="project" value="Ensembl"/>
</dbReference>
<dbReference type="GO" id="GO:0005886">
    <property type="term" value="C:plasma membrane"/>
    <property type="evidence" value="ECO:0000250"/>
    <property type="project" value="UniProtKB"/>
</dbReference>
<dbReference type="GO" id="GO:0098793">
    <property type="term" value="C:presynapse"/>
    <property type="evidence" value="ECO:0000314"/>
    <property type="project" value="SynGO"/>
</dbReference>
<dbReference type="GO" id="GO:0001664">
    <property type="term" value="F:G protein-coupled receptor binding"/>
    <property type="evidence" value="ECO:0007669"/>
    <property type="project" value="Ensembl"/>
</dbReference>
<dbReference type="GO" id="GO:0046625">
    <property type="term" value="F:sphingolipid binding"/>
    <property type="evidence" value="ECO:0007669"/>
    <property type="project" value="Ensembl"/>
</dbReference>
<dbReference type="GO" id="GO:0038036">
    <property type="term" value="F:sphingosine-1-phosphate receptor activity"/>
    <property type="evidence" value="ECO:0000315"/>
    <property type="project" value="UniProtKB"/>
</dbReference>
<dbReference type="GO" id="GO:0030036">
    <property type="term" value="P:actin cytoskeleton organization"/>
    <property type="evidence" value="ECO:0000315"/>
    <property type="project" value="UniProtKB"/>
</dbReference>
<dbReference type="GO" id="GO:0007193">
    <property type="term" value="P:adenylate cyclase-inhibiting G protein-coupled receptor signaling pathway"/>
    <property type="evidence" value="ECO:0000314"/>
    <property type="project" value="MGI"/>
</dbReference>
<dbReference type="GO" id="GO:0001525">
    <property type="term" value="P:angiogenesis"/>
    <property type="evidence" value="ECO:0000314"/>
    <property type="project" value="MGI"/>
</dbReference>
<dbReference type="GO" id="GO:0001955">
    <property type="term" value="P:blood vessel maturation"/>
    <property type="evidence" value="ECO:0000315"/>
    <property type="project" value="UniProtKB"/>
</dbReference>
<dbReference type="GO" id="GO:0007420">
    <property type="term" value="P:brain development"/>
    <property type="evidence" value="ECO:0000315"/>
    <property type="project" value="MGI"/>
</dbReference>
<dbReference type="GO" id="GO:0003245">
    <property type="term" value="P:cardiac muscle tissue growth involved in heart morphogenesis"/>
    <property type="evidence" value="ECO:0000315"/>
    <property type="project" value="UniProtKB"/>
</dbReference>
<dbReference type="GO" id="GO:0016477">
    <property type="term" value="P:cell migration"/>
    <property type="evidence" value="ECO:0000315"/>
    <property type="project" value="UniProtKB"/>
</dbReference>
<dbReference type="GO" id="GO:0008283">
    <property type="term" value="P:cell population proliferation"/>
    <property type="evidence" value="ECO:0000315"/>
    <property type="project" value="MGI"/>
</dbReference>
<dbReference type="GO" id="GO:0006935">
    <property type="term" value="P:chemotaxis"/>
    <property type="evidence" value="ECO:0000315"/>
    <property type="project" value="UniProtKB"/>
</dbReference>
<dbReference type="GO" id="GO:0045446">
    <property type="term" value="P:endothelial cell differentiation"/>
    <property type="evidence" value="ECO:0007669"/>
    <property type="project" value="Ensembl"/>
</dbReference>
<dbReference type="GO" id="GO:0061384">
    <property type="term" value="P:heart trabecula morphogenesis"/>
    <property type="evidence" value="ECO:0000315"/>
    <property type="project" value="UniProtKB"/>
</dbReference>
<dbReference type="GO" id="GO:0030032">
    <property type="term" value="P:lamellipodium assembly"/>
    <property type="evidence" value="ECO:0000315"/>
    <property type="project" value="UniProtKB"/>
</dbReference>
<dbReference type="GO" id="GO:0030595">
    <property type="term" value="P:leukocyte chemotaxis"/>
    <property type="evidence" value="ECO:0000314"/>
    <property type="project" value="MGI"/>
</dbReference>
<dbReference type="GO" id="GO:0051497">
    <property type="term" value="P:negative regulation of stress fiber assembly"/>
    <property type="evidence" value="ECO:0007669"/>
    <property type="project" value="Ensembl"/>
</dbReference>
<dbReference type="GO" id="GO:0030182">
    <property type="term" value="P:neuron differentiation"/>
    <property type="evidence" value="ECO:0007669"/>
    <property type="project" value="Ensembl"/>
</dbReference>
<dbReference type="GO" id="GO:0007200">
    <property type="term" value="P:phospholipase C-activating G protein-coupled receptor signaling pathway"/>
    <property type="evidence" value="ECO:0007669"/>
    <property type="project" value="Ensembl"/>
</dbReference>
<dbReference type="GO" id="GO:0030335">
    <property type="term" value="P:positive regulation of cell migration"/>
    <property type="evidence" value="ECO:0007669"/>
    <property type="project" value="Ensembl"/>
</dbReference>
<dbReference type="GO" id="GO:0008284">
    <property type="term" value="P:positive regulation of cell population proliferation"/>
    <property type="evidence" value="ECO:0000315"/>
    <property type="project" value="MGI"/>
</dbReference>
<dbReference type="GO" id="GO:0050927">
    <property type="term" value="P:positive regulation of positive chemotaxis"/>
    <property type="evidence" value="ECO:0007669"/>
    <property type="project" value="Ensembl"/>
</dbReference>
<dbReference type="GO" id="GO:0048661">
    <property type="term" value="P:positive regulation of smooth muscle cell proliferation"/>
    <property type="evidence" value="ECO:0007669"/>
    <property type="project" value="Ensembl"/>
</dbReference>
<dbReference type="GO" id="GO:0045944">
    <property type="term" value="P:positive regulation of transcription by RNA polymerase II"/>
    <property type="evidence" value="ECO:0007669"/>
    <property type="project" value="Ensembl"/>
</dbReference>
<dbReference type="GO" id="GO:0030500">
    <property type="term" value="P:regulation of bone mineralization"/>
    <property type="evidence" value="ECO:0000315"/>
    <property type="project" value="UniProtKB"/>
</dbReference>
<dbReference type="GO" id="GO:0045124">
    <property type="term" value="P:regulation of bone resorption"/>
    <property type="evidence" value="ECO:0000315"/>
    <property type="project" value="UniProtKB"/>
</dbReference>
<dbReference type="GO" id="GO:0030155">
    <property type="term" value="P:regulation of cell adhesion"/>
    <property type="evidence" value="ECO:0000314"/>
    <property type="project" value="MGI"/>
</dbReference>
<dbReference type="GO" id="GO:0003376">
    <property type="term" value="P:sphingosine-1-phosphate receptor signaling pathway"/>
    <property type="evidence" value="ECO:0000315"/>
    <property type="project" value="UniProtKB"/>
</dbReference>
<dbReference type="GO" id="GO:0072678">
    <property type="term" value="P:T cell migration"/>
    <property type="evidence" value="ECO:0000315"/>
    <property type="project" value="UniProtKB"/>
</dbReference>
<dbReference type="GO" id="GO:0019226">
    <property type="term" value="P:transmission of nerve impulse"/>
    <property type="evidence" value="ECO:0007669"/>
    <property type="project" value="Ensembl"/>
</dbReference>
<dbReference type="CDD" id="cd15346">
    <property type="entry name" value="7tmA_S1PR1_Edg1"/>
    <property type="match status" value="1"/>
</dbReference>
<dbReference type="FunFam" id="1.20.1070.10:FF:000098">
    <property type="entry name" value="Sphingosine 1-phosphate receptor 1"/>
    <property type="match status" value="1"/>
</dbReference>
<dbReference type="Gene3D" id="1.20.1070.10">
    <property type="entry name" value="Rhodopsin 7-helix transmembrane proteins"/>
    <property type="match status" value="1"/>
</dbReference>
<dbReference type="InterPro" id="IPR000987">
    <property type="entry name" value="EDG1"/>
</dbReference>
<dbReference type="InterPro" id="IPR000276">
    <property type="entry name" value="GPCR_Rhodpsn"/>
</dbReference>
<dbReference type="InterPro" id="IPR017452">
    <property type="entry name" value="GPCR_Rhodpsn_7TM"/>
</dbReference>
<dbReference type="InterPro" id="IPR004061">
    <property type="entry name" value="S1P_rcpt"/>
</dbReference>
<dbReference type="PANTHER" id="PTHR22750">
    <property type="entry name" value="G-PROTEIN COUPLED RECEPTOR"/>
    <property type="match status" value="1"/>
</dbReference>
<dbReference type="Pfam" id="PF00001">
    <property type="entry name" value="7tm_1"/>
    <property type="match status" value="1"/>
</dbReference>
<dbReference type="PRINTS" id="PR00642">
    <property type="entry name" value="EDG1RECEPTOR"/>
</dbReference>
<dbReference type="PRINTS" id="PR00237">
    <property type="entry name" value="GPCRRHODOPSN"/>
</dbReference>
<dbReference type="PRINTS" id="PR01523">
    <property type="entry name" value="S1PRECEPTOR"/>
</dbReference>
<dbReference type="SMART" id="SM01381">
    <property type="entry name" value="7TM_GPCR_Srsx"/>
    <property type="match status" value="1"/>
</dbReference>
<dbReference type="SUPFAM" id="SSF81321">
    <property type="entry name" value="Family A G protein-coupled receptor-like"/>
    <property type="match status" value="1"/>
</dbReference>
<dbReference type="PROSITE" id="PS00237">
    <property type="entry name" value="G_PROTEIN_RECEP_F1_1"/>
    <property type="match status" value="1"/>
</dbReference>
<dbReference type="PROSITE" id="PS50262">
    <property type="entry name" value="G_PROTEIN_RECEP_F1_2"/>
    <property type="match status" value="1"/>
</dbReference>
<comment type="function">
    <text evidence="6 7 8 9 10 11 13 14 15 16">G-protein coupled receptor for the bioactive lysosphingolipid sphingosine 1-phosphate (S1P) that seems to be coupled to the G(i) subclass of heteromeric G proteins. Signaling leads to the activation of RAC1, SRC, PTK2/FAK1 and MAP kinases. Plays an important role in cell migration, probably via its role in the reorganization of the actin cytoskeleton and the formation of lamellipodia in response to stimuli that increase the activity of the sphingosine kinase SPHK1. Required for normal chemotaxis toward sphingosine 1-phosphate. Required for normal embryonic heart development and normal cardiac morphogenesis. Plays an important role in the regulation of sprouting angiogenesis and vascular maturation. Inhibits sprouting angiogenesis to prevent excessive sprouting during blood vessel development. Required for normal egress of mature T-cells from the thymus into the blood stream and into peripheral lymphoid organs. Plays a role in the migration of osteoclast precursor cells, the regulation of bone mineralization and bone homeostasis. Plays a role in responses to oxidized 1-palmitoyl-2-arachidonoyl-sn-glycero-3-phosphocholine by pulmonary endothelial cells and in the protection against ventilator-induced lung injury.</text>
</comment>
<comment type="subunit">
    <text evidence="2">Interacts with GNAI1 and GNAI3. Interacts with CD69; this interaction promotes S1PR1 degradation.</text>
</comment>
<comment type="subcellular location">
    <subcellularLocation>
        <location evidence="2">Cell membrane</location>
        <topology evidence="2">Multi-pass membrane protein</topology>
    </subcellularLocation>
    <subcellularLocation>
        <location evidence="2">Endosome</location>
    </subcellularLocation>
    <subcellularLocation>
        <location evidence="2">Membrane raft</location>
    </subcellularLocation>
    <text evidence="2">Recruited to caveolin-enriched plasma membrane microdomains in response to oxidized 1-palmitoyl-2-arachidonoyl-sn-glycero-3-phosphocholine. Ligand binding leads to receptor internalization.</text>
</comment>
<comment type="tissue specificity">
    <text evidence="6 17">Expressed in a wide variety of tissues with highest levels in brain, heart and spleen. Lower levels found in kidney, liver, lung, muscle, placenta, thymus, and uterus. Very low levels in intestine, stomach and testis. According to PubMed:9931453, expressed modestly in apparent endothelial cells surrounding some blood vessels (e.g. aortic trunk).</text>
</comment>
<comment type="PTM">
    <text evidence="2">Palmitoylated by ZDHHC5. Palmitoylation is required for targeting to plasma membrane, enabling G(i) coupling.</text>
</comment>
<comment type="disruption phenotype">
    <text evidence="6 8 9 10 11 12 13 15 16">Embryonic lethality, due to impaired vascular maturation and defects in heart development. Embryos appear normal up to 11.5 dpc, but after that they display massive hemorrhage. They have a normally arborized vascular network, but present excessive sprouting angiogenesis and severe aberrations in vessel size. Their aorta and other arteries are not properly enveloped by vascular smooth muscle cells, causing hemorrhage. Likewise, small blood vessels show a marked reduction in the number of vascular pericytes. In addition, mutants display defects in heart morphogenesis, with reduced myocardial tissue and altered morphology of the heart wall and the trabeculae (PubMed:11032855, PubMed:14732704, PubMed:21668976, PubMed:22951644). At 12.5 dpc, mutant embryos also show a massive cell loss in the forebrain (PubMed:16314531). Conditional knockout in endothelial cells leads to the same vascular maturation defect as that seen in homozygous knockout mice (PubMed:12869509). Conditional knockout in fibroblasts leads to defects in chemotaxis, probably due to defects in the activation of SRC and PTK2/FAK1, resulting in defects in the reorganization of the actin cytoskeleton and lamellipodia formation (PubMed:11726541). A T-cell-specific knockout leads to a defect in the egress of mature T-cells from the thymus into the periphery (PubMed:14737169). Conditional knockout in osteoclast precursors leads to osteoporosis, due to impaired migration of osteoclast precursors and increased osteoclast attachment to the bone (PubMed:19204730).</text>
</comment>
<comment type="similarity">
    <text evidence="4">Belongs to the G-protein coupled receptor 1 family.</text>
</comment>
<proteinExistence type="evidence at protein level"/>
<reference key="1">
    <citation type="journal article" date="1997" name="Genomics">
        <title>The mouse gene for the inducible G-protein-coupled receptor edg-1.</title>
        <authorList>
            <person name="Liu C.H."/>
            <person name="Hla T."/>
        </authorList>
    </citation>
    <scope>NUCLEOTIDE SEQUENCE [GENOMIC DNA]</scope>
    <source>
        <strain>BALB/cJ</strain>
        <tissue>Liver</tissue>
    </source>
</reference>
<reference key="2">
    <citation type="journal article" date="1999" name="Gene">
        <title>Comparative analysis of three murine G-protein coupled receptors activated by sphingosine-1-phosphate.</title>
        <authorList>
            <person name="Zhang G."/>
            <person name="Contos J.J.A."/>
            <person name="Weiner J.A."/>
            <person name="Fukushima N."/>
            <person name="Chun J."/>
        </authorList>
    </citation>
    <scope>NUCLEOTIDE SEQUENCE [GENOMIC DNA]</scope>
    <scope>TISSUE SPECIFICITY</scope>
    <source>
        <strain>129/SvJ</strain>
    </source>
</reference>
<reference key="3">
    <citation type="journal article" date="2005" name="Science">
        <title>The transcriptional landscape of the mammalian genome.</title>
        <authorList>
            <person name="Carninci P."/>
            <person name="Kasukawa T."/>
            <person name="Katayama S."/>
            <person name="Gough J."/>
            <person name="Frith M.C."/>
            <person name="Maeda N."/>
            <person name="Oyama R."/>
            <person name="Ravasi T."/>
            <person name="Lenhard B."/>
            <person name="Wells C."/>
            <person name="Kodzius R."/>
            <person name="Shimokawa K."/>
            <person name="Bajic V.B."/>
            <person name="Brenner S.E."/>
            <person name="Batalov S."/>
            <person name="Forrest A.R."/>
            <person name="Zavolan M."/>
            <person name="Davis M.J."/>
            <person name="Wilming L.G."/>
            <person name="Aidinis V."/>
            <person name="Allen J.E."/>
            <person name="Ambesi-Impiombato A."/>
            <person name="Apweiler R."/>
            <person name="Aturaliya R.N."/>
            <person name="Bailey T.L."/>
            <person name="Bansal M."/>
            <person name="Baxter L."/>
            <person name="Beisel K.W."/>
            <person name="Bersano T."/>
            <person name="Bono H."/>
            <person name="Chalk A.M."/>
            <person name="Chiu K.P."/>
            <person name="Choudhary V."/>
            <person name="Christoffels A."/>
            <person name="Clutterbuck D.R."/>
            <person name="Crowe M.L."/>
            <person name="Dalla E."/>
            <person name="Dalrymple B.P."/>
            <person name="de Bono B."/>
            <person name="Della Gatta G."/>
            <person name="di Bernardo D."/>
            <person name="Down T."/>
            <person name="Engstrom P."/>
            <person name="Fagiolini M."/>
            <person name="Faulkner G."/>
            <person name="Fletcher C.F."/>
            <person name="Fukushima T."/>
            <person name="Furuno M."/>
            <person name="Futaki S."/>
            <person name="Gariboldi M."/>
            <person name="Georgii-Hemming P."/>
            <person name="Gingeras T.R."/>
            <person name="Gojobori T."/>
            <person name="Green R.E."/>
            <person name="Gustincich S."/>
            <person name="Harbers M."/>
            <person name="Hayashi Y."/>
            <person name="Hensch T.K."/>
            <person name="Hirokawa N."/>
            <person name="Hill D."/>
            <person name="Huminiecki L."/>
            <person name="Iacono M."/>
            <person name="Ikeo K."/>
            <person name="Iwama A."/>
            <person name="Ishikawa T."/>
            <person name="Jakt M."/>
            <person name="Kanapin A."/>
            <person name="Katoh M."/>
            <person name="Kawasawa Y."/>
            <person name="Kelso J."/>
            <person name="Kitamura H."/>
            <person name="Kitano H."/>
            <person name="Kollias G."/>
            <person name="Krishnan S.P."/>
            <person name="Kruger A."/>
            <person name="Kummerfeld S.K."/>
            <person name="Kurochkin I.V."/>
            <person name="Lareau L.F."/>
            <person name="Lazarevic D."/>
            <person name="Lipovich L."/>
            <person name="Liu J."/>
            <person name="Liuni S."/>
            <person name="McWilliam S."/>
            <person name="Madan Babu M."/>
            <person name="Madera M."/>
            <person name="Marchionni L."/>
            <person name="Matsuda H."/>
            <person name="Matsuzawa S."/>
            <person name="Miki H."/>
            <person name="Mignone F."/>
            <person name="Miyake S."/>
            <person name="Morris K."/>
            <person name="Mottagui-Tabar S."/>
            <person name="Mulder N."/>
            <person name="Nakano N."/>
            <person name="Nakauchi H."/>
            <person name="Ng P."/>
            <person name="Nilsson R."/>
            <person name="Nishiguchi S."/>
            <person name="Nishikawa S."/>
            <person name="Nori F."/>
            <person name="Ohara O."/>
            <person name="Okazaki Y."/>
            <person name="Orlando V."/>
            <person name="Pang K.C."/>
            <person name="Pavan W.J."/>
            <person name="Pavesi G."/>
            <person name="Pesole G."/>
            <person name="Petrovsky N."/>
            <person name="Piazza S."/>
            <person name="Reed J."/>
            <person name="Reid J.F."/>
            <person name="Ring B.Z."/>
            <person name="Ringwald M."/>
            <person name="Rost B."/>
            <person name="Ruan Y."/>
            <person name="Salzberg S.L."/>
            <person name="Sandelin A."/>
            <person name="Schneider C."/>
            <person name="Schoenbach C."/>
            <person name="Sekiguchi K."/>
            <person name="Semple C.A."/>
            <person name="Seno S."/>
            <person name="Sessa L."/>
            <person name="Sheng Y."/>
            <person name="Shibata Y."/>
            <person name="Shimada H."/>
            <person name="Shimada K."/>
            <person name="Silva D."/>
            <person name="Sinclair B."/>
            <person name="Sperling S."/>
            <person name="Stupka E."/>
            <person name="Sugiura K."/>
            <person name="Sultana R."/>
            <person name="Takenaka Y."/>
            <person name="Taki K."/>
            <person name="Tammoja K."/>
            <person name="Tan S.L."/>
            <person name="Tang S."/>
            <person name="Taylor M.S."/>
            <person name="Tegner J."/>
            <person name="Teichmann S.A."/>
            <person name="Ueda H.R."/>
            <person name="van Nimwegen E."/>
            <person name="Verardo R."/>
            <person name="Wei C.L."/>
            <person name="Yagi K."/>
            <person name="Yamanishi H."/>
            <person name="Zabarovsky E."/>
            <person name="Zhu S."/>
            <person name="Zimmer A."/>
            <person name="Hide W."/>
            <person name="Bult C."/>
            <person name="Grimmond S.M."/>
            <person name="Teasdale R.D."/>
            <person name="Liu E.T."/>
            <person name="Brusic V."/>
            <person name="Quackenbush J."/>
            <person name="Wahlestedt C."/>
            <person name="Mattick J.S."/>
            <person name="Hume D.A."/>
            <person name="Kai C."/>
            <person name="Sasaki D."/>
            <person name="Tomaru Y."/>
            <person name="Fukuda S."/>
            <person name="Kanamori-Katayama M."/>
            <person name="Suzuki M."/>
            <person name="Aoki J."/>
            <person name="Arakawa T."/>
            <person name="Iida J."/>
            <person name="Imamura K."/>
            <person name="Itoh M."/>
            <person name="Kato T."/>
            <person name="Kawaji H."/>
            <person name="Kawagashira N."/>
            <person name="Kawashima T."/>
            <person name="Kojima M."/>
            <person name="Kondo S."/>
            <person name="Konno H."/>
            <person name="Nakano K."/>
            <person name="Ninomiya N."/>
            <person name="Nishio T."/>
            <person name="Okada M."/>
            <person name="Plessy C."/>
            <person name="Shibata K."/>
            <person name="Shiraki T."/>
            <person name="Suzuki S."/>
            <person name="Tagami M."/>
            <person name="Waki K."/>
            <person name="Watahiki A."/>
            <person name="Okamura-Oho Y."/>
            <person name="Suzuki H."/>
            <person name="Kawai J."/>
            <person name="Hayashizaki Y."/>
        </authorList>
    </citation>
    <scope>NUCLEOTIDE SEQUENCE [LARGE SCALE MRNA]</scope>
    <source>
        <strain>C57BL/6J</strain>
        <tissue>Heart</tissue>
        <tissue>Lung</tissue>
    </source>
</reference>
<reference key="4">
    <citation type="submission" date="2005-09" db="EMBL/GenBank/DDBJ databases">
        <authorList>
            <person name="Mural R.J."/>
            <person name="Adams M.D."/>
            <person name="Myers E.W."/>
            <person name="Smith H.O."/>
            <person name="Venter J.C."/>
        </authorList>
    </citation>
    <scope>NUCLEOTIDE SEQUENCE [LARGE SCALE GENOMIC DNA]</scope>
</reference>
<reference key="5">
    <citation type="journal article" date="2004" name="Genome Res.">
        <title>The status, quality, and expansion of the NIH full-length cDNA project: the Mammalian Gene Collection (MGC).</title>
        <authorList>
            <consortium name="The MGC Project Team"/>
        </authorList>
    </citation>
    <scope>NUCLEOTIDE SEQUENCE [LARGE SCALE MRNA]</scope>
    <source>
        <strain>C57BL/6J</strain>
        <tissue>Eye</tissue>
    </source>
</reference>
<reference key="6">
    <citation type="journal article" date="2000" name="J. Clin. Invest.">
        <title>Edg-1, the G protein-coupled receptor for sphingosine-1-phosphate, is essential for vascular maturation.</title>
        <authorList>
            <person name="Liu Y."/>
            <person name="Wada R."/>
            <person name="Yamashita T."/>
            <person name="Mi Y."/>
            <person name="Deng C.X."/>
            <person name="Hobson J.P."/>
            <person name="Rosenfeldt H.M."/>
            <person name="Nava V.E."/>
            <person name="Chae S.S."/>
            <person name="Lee M.J."/>
            <person name="Liu C.H."/>
            <person name="Hla T."/>
            <person name="Spiegel S."/>
            <person name="Proia R.L."/>
        </authorList>
    </citation>
    <scope>DISRUPTION PHENOTYPE</scope>
    <scope>FUNCTION IN VASCULAR MATURATION AND CHEMOTAXIS</scope>
    <scope>TISSUE SPECIFICITY</scope>
</reference>
<reference key="7">
    <citation type="journal article" date="2001" name="FASEB J.">
        <title>EDG-1 links the PDGF receptor to Src and focal adhesion kinase activation leading to lamellipodia formation and cell migration.</title>
        <authorList>
            <person name="Rosenfeldt H.M."/>
            <person name="Hobson J.P."/>
            <person name="Maceyka M."/>
            <person name="Olivera A."/>
            <person name="Nava V.E."/>
            <person name="Milstien S."/>
            <person name="Spiegel S."/>
        </authorList>
    </citation>
    <scope>FUNCTION IN FIBROBLAST CHEMOTAXIS</scope>
    <scope>DISRUPTION PHENOTYPE</scope>
</reference>
<reference key="8">
    <citation type="journal article" date="2001" name="Science">
        <title>Role of the sphingosine-1-phosphate receptor EDG-1 in PDGF-induced cell motility.</title>
        <authorList>
            <person name="Hobson J.P."/>
            <person name="Rosenfeldt H.M."/>
            <person name="Barak L.S."/>
            <person name="Olivera A."/>
            <person name="Poulton S."/>
            <person name="Caron M.G."/>
            <person name="Milstien S."/>
            <person name="Spiegel S."/>
        </authorList>
    </citation>
    <scope>FUNCTION</scope>
</reference>
<reference key="9">
    <citation type="journal article" date="2003" name="Blood">
        <title>G-protein-coupled receptor S1P1 acts within endothelial cells to regulate vascular maturation.</title>
        <authorList>
            <person name="Allende M.L."/>
            <person name="Yamashita T."/>
            <person name="Proia R.L."/>
        </authorList>
    </citation>
    <scope>DISRUPTION PHENOTYPE</scope>
    <scope>FUNCTION IN VASCULAR MATURATION</scope>
</reference>
<reference key="10">
    <citation type="journal article" date="2004" name="J. Biol. Chem.">
        <title>Expression of the sphingosine 1-phosphate receptor, S1P1, on T-cells controls thymic emigration.</title>
        <authorList>
            <person name="Allende M.L."/>
            <person name="Dreier J.L."/>
            <person name="Mandala S."/>
            <person name="Proia R.L."/>
        </authorList>
    </citation>
    <scope>DISRUPTION PHENOTYPE</scope>
    <scope>FUNCTION IN T-CELL MIGRATION</scope>
</reference>
<reference key="11">
    <citation type="journal article" date="2005" name="Mol. Cell. Biol.">
        <title>Essential role for sphingosine kinases in neural and vascular development.</title>
        <authorList>
            <person name="Mizugishi K."/>
            <person name="Yamashita T."/>
            <person name="Olivera A."/>
            <person name="Miller G.F."/>
            <person name="Spiegel S."/>
            <person name="Proia R.L."/>
        </authorList>
    </citation>
    <scope>DISRUPTION PHENOTYPE</scope>
</reference>
<reference key="12">
    <citation type="journal article" date="2004" name="Nature">
        <title>Lymphocyte egress from thymus and peripheral lymphoid organs is dependent on S1P receptor 1.</title>
        <authorList>
            <person name="Matloubian M."/>
            <person name="Lo C.G."/>
            <person name="Cinamon G."/>
            <person name="Lesneski M.J."/>
            <person name="Xu Y."/>
            <person name="Brinkmann V."/>
            <person name="Allende M.L."/>
            <person name="Proia R.L."/>
            <person name="Cyster J.G."/>
        </authorList>
    </citation>
    <scope>DISRUPTION PHENOTYPE</scope>
    <scope>FUNCTION IN T-CELL MIGRATION</scope>
</reference>
<reference key="13">
    <citation type="journal article" date="2007" name="Proc. Natl. Acad. Sci. U.S.A.">
        <title>Large-scale phosphorylation analysis of mouse liver.</title>
        <authorList>
            <person name="Villen J."/>
            <person name="Beausoleil S.A."/>
            <person name="Gerber S.A."/>
            <person name="Gygi S.P."/>
        </authorList>
    </citation>
    <scope>IDENTIFICATION BY MASS SPECTROMETRY [LARGE SCALE ANALYSIS]</scope>
    <source>
        <tissue>Liver</tissue>
    </source>
</reference>
<reference key="14">
    <citation type="journal article" date="2009" name="Circ. Res.">
        <title>Akt-mediated transactivation of the S1P1 receptor in caveolin-enriched microdomains regulates endothelial barrier enhancement by oxidized phospholipids.</title>
        <authorList>
            <person name="Singleton P.A."/>
            <person name="Chatchavalvanich S."/>
            <person name="Fu P."/>
            <person name="Xing J."/>
            <person name="Birukova A.A."/>
            <person name="Fortune J.A."/>
            <person name="Klibanov A.M."/>
            <person name="Garcia J.G."/>
            <person name="Birukov K.G."/>
        </authorList>
    </citation>
    <scope>FUNCTION</scope>
</reference>
<reference key="15">
    <citation type="journal article" date="2009" name="Nature">
        <title>Sphingosine-1-phosphate mobilizes osteoclast precursors and regulates bone homeostasis.</title>
        <authorList>
            <person name="Ishii M."/>
            <person name="Egen J.G."/>
            <person name="Klauschen F."/>
            <person name="Meier-Schellersheim M."/>
            <person name="Saeki Y."/>
            <person name="Vacher J."/>
            <person name="Proia R.L."/>
            <person name="Germain R.N."/>
        </authorList>
    </citation>
    <scope>DISRUPTION PHENOTYPE</scope>
    <scope>FUNCTION IN OSTEOCLAST MIGRATION AND BONE HOMEOSTASIS</scope>
</reference>
<reference key="16">
    <citation type="journal article" date="2010" name="Cell">
        <title>A tissue-specific atlas of mouse protein phosphorylation and expression.</title>
        <authorList>
            <person name="Huttlin E.L."/>
            <person name="Jedrychowski M.P."/>
            <person name="Elias J.E."/>
            <person name="Goswami T."/>
            <person name="Rad R."/>
            <person name="Beausoleil S.A."/>
            <person name="Villen J."/>
            <person name="Haas W."/>
            <person name="Sowa M.E."/>
            <person name="Gygi S.P."/>
        </authorList>
    </citation>
    <scope>PHOSPHORYLATION [LARGE SCALE ANALYSIS] AT SER-351</scope>
    <scope>IDENTIFICATION BY MASS SPECTROMETRY [LARGE SCALE ANALYSIS]</scope>
    <source>
        <tissue>Brain</tissue>
        <tissue>Kidney</tissue>
        <tissue>Lung</tissue>
    </source>
</reference>
<reference key="17">
    <citation type="journal article" date="2011" name="BMC Dev. Biol.">
        <title>The Sphingosine-1-phosphate receptor 1 mediates S1P action during cardiac development.</title>
        <authorList>
            <person name="Poulsen R.R."/>
            <person name="McClaskey C.M."/>
            <person name="Rivkees S.A."/>
            <person name="Wendler C.C."/>
        </authorList>
    </citation>
    <scope>DISRUPTION PHENOTYPE</scope>
    <scope>FUNCTION IN HEART MORPHOGENESIS AND DEVELOPMENT</scope>
</reference>
<reference key="18">
    <citation type="journal article" date="2012" name="Development">
        <title>S1P1 inhibits sprouting angiogenesis during vascular development.</title>
        <authorList>
            <person name="Ben Shoham A."/>
            <person name="Malkinson G."/>
            <person name="Krief S."/>
            <person name="Shwartz Y."/>
            <person name="Ely Y."/>
            <person name="Ferrara N."/>
            <person name="Yaniv K."/>
            <person name="Zelzer E."/>
        </authorList>
    </citation>
    <scope>DISRUPTION PHENOTYPE</scope>
    <scope>FUNCTION IN SPROUTING ANGIOGENESIS</scope>
</reference>
<reference key="19">
    <citation type="journal article" date="2013" name="Mol. Cell">
        <title>SIRT5-mediated lysine desuccinylation impacts diverse metabolic pathways.</title>
        <authorList>
            <person name="Park J."/>
            <person name="Chen Y."/>
            <person name="Tishkoff D.X."/>
            <person name="Peng C."/>
            <person name="Tan M."/>
            <person name="Dai L."/>
            <person name="Xie Z."/>
            <person name="Zhang Y."/>
            <person name="Zwaans B.M."/>
            <person name="Skinner M.E."/>
            <person name="Lombard D.B."/>
            <person name="Zhao Y."/>
        </authorList>
    </citation>
    <scope>ACETYLATION [LARGE SCALE ANALYSIS] AT VAL-2 AND LYS-10</scope>
    <scope>CLEAVAGE OF INITIATOR METHIONINE [LARGE SCALE ANALYSIS]</scope>
    <scope>IDENTIFICATION BY MASS SPECTROMETRY [LARGE SCALE ANALYSIS]</scope>
    <source>
        <tissue>Embryonic fibroblast</tissue>
    </source>
</reference>
<protein>
    <recommendedName>
        <fullName evidence="19">Sphingosine 1-phosphate receptor 1</fullName>
        <shortName>S1P receptor 1</shortName>
        <shortName evidence="18">S1P1</shortName>
    </recommendedName>
    <alternativeName>
        <fullName>Endothelial differentiation G-protein coupled receptor 1</fullName>
    </alternativeName>
    <alternativeName>
        <fullName>Lysophospholipid receptor B1</fullName>
    </alternativeName>
    <alternativeName>
        <fullName>Sphingosine 1-phosphate receptor Edg-1</fullName>
        <shortName>S1P receptor Edg-1</shortName>
    </alternativeName>
    <cdAntigenName>CD363</cdAntigenName>
</protein>